<sequence length="225" mass="25991">MLYENMSDSFLLSDAGLEFDEALLEVDQEKDDYLDDFENWTVVPVETIEGINYYPNCLPESVQRNLINNVPKELLSIYGSGKQSHLYIPFPAHINCLNDYIPSDFKQRLWKGQDAEAIIMQVYNPGDGIIPHKDLEMFGDGVAIFSFLSNTTMIFTHPELKLKSKIRLEKGSLLLMSGTARYDWFHEIPFRAGDWVMNDGEEKWVSRSQRLSVTMRRIIENHVFG</sequence>
<comment type="subcellular location">
    <subcellularLocation>
        <location evidence="3">Cytoplasm</location>
    </subcellularLocation>
    <subcellularLocation>
        <location evidence="3">Nucleus</location>
    </subcellularLocation>
</comment>
<comment type="similarity">
    <text evidence="1">Belongs to the iron/ascorbate-dependent oxidoreductase family.</text>
</comment>
<name>YLW2_SCHPO</name>
<accession>Q9UT12</accession>
<protein>
    <recommendedName>
        <fullName>Uncharacterized protein P8A3.02c</fullName>
    </recommendedName>
</protein>
<proteinExistence type="evidence at protein level"/>
<keyword id="KW-0002">3D-structure</keyword>
<keyword id="KW-0963">Cytoplasm</keyword>
<keyword id="KW-0408">Iron</keyword>
<keyword id="KW-0539">Nucleus</keyword>
<keyword id="KW-0560">Oxidoreductase</keyword>
<keyword id="KW-1185">Reference proteome</keyword>
<keyword id="KW-0847">Vitamin C</keyword>
<organism>
    <name type="scientific">Schizosaccharomyces pombe (strain 972 / ATCC 24843)</name>
    <name type="common">Fission yeast</name>
    <dbReference type="NCBI Taxonomy" id="284812"/>
    <lineage>
        <taxon>Eukaryota</taxon>
        <taxon>Fungi</taxon>
        <taxon>Dikarya</taxon>
        <taxon>Ascomycota</taxon>
        <taxon>Taphrinomycotina</taxon>
        <taxon>Schizosaccharomycetes</taxon>
        <taxon>Schizosaccharomycetales</taxon>
        <taxon>Schizosaccharomycetaceae</taxon>
        <taxon>Schizosaccharomyces</taxon>
    </lineage>
</organism>
<gene>
    <name type="ORF">SPAP8A3.02c</name>
</gene>
<feature type="chain" id="PRO_0000315939" description="Uncharacterized protein P8A3.02c">
    <location>
        <begin position="1"/>
        <end position="225"/>
    </location>
</feature>
<feature type="domain" description="Fe2OG dioxygenase" evidence="2">
    <location>
        <begin position="114"/>
        <end position="219"/>
    </location>
</feature>
<feature type="helix" evidence="6">
    <location>
        <begin position="45"/>
        <end position="47"/>
    </location>
</feature>
<feature type="strand" evidence="6">
    <location>
        <begin position="51"/>
        <end position="54"/>
    </location>
</feature>
<feature type="helix" evidence="6">
    <location>
        <begin position="60"/>
        <end position="68"/>
    </location>
</feature>
<feature type="helix" evidence="6">
    <location>
        <begin position="72"/>
        <end position="75"/>
    </location>
</feature>
<feature type="strand" evidence="6">
    <location>
        <begin position="78"/>
        <end position="80"/>
    </location>
</feature>
<feature type="strand" evidence="6">
    <location>
        <begin position="83"/>
        <end position="89"/>
    </location>
</feature>
<feature type="helix" evidence="6">
    <location>
        <begin position="92"/>
        <end position="95"/>
    </location>
</feature>
<feature type="helix" evidence="6">
    <location>
        <begin position="96"/>
        <end position="100"/>
    </location>
</feature>
<feature type="helix" evidence="6">
    <location>
        <begin position="103"/>
        <end position="109"/>
    </location>
</feature>
<feature type="strand" evidence="6">
    <location>
        <begin position="117"/>
        <end position="123"/>
    </location>
</feature>
<feature type="strand" evidence="6">
    <location>
        <begin position="129"/>
        <end position="132"/>
    </location>
</feature>
<feature type="helix" evidence="6">
    <location>
        <begin position="136"/>
        <end position="138"/>
    </location>
</feature>
<feature type="strand" evidence="6">
    <location>
        <begin position="142"/>
        <end position="149"/>
    </location>
</feature>
<feature type="strand" evidence="6">
    <location>
        <begin position="151"/>
        <end position="157"/>
    </location>
</feature>
<feature type="turn" evidence="6">
    <location>
        <begin position="158"/>
        <end position="161"/>
    </location>
</feature>
<feature type="strand" evidence="6">
    <location>
        <begin position="162"/>
        <end position="168"/>
    </location>
</feature>
<feature type="strand" evidence="6">
    <location>
        <begin position="173"/>
        <end position="176"/>
    </location>
</feature>
<feature type="helix" evidence="6">
    <location>
        <begin position="178"/>
        <end position="182"/>
    </location>
</feature>
<feature type="strand" evidence="6">
    <location>
        <begin position="184"/>
        <end position="188"/>
    </location>
</feature>
<feature type="strand" evidence="6">
    <location>
        <begin position="190"/>
        <end position="198"/>
    </location>
</feature>
<feature type="strand" evidence="6">
    <location>
        <begin position="201"/>
        <end position="206"/>
    </location>
</feature>
<feature type="strand" evidence="6">
    <location>
        <begin position="210"/>
        <end position="216"/>
    </location>
</feature>
<evidence type="ECO:0000255" key="1"/>
<evidence type="ECO:0000255" key="2">
    <source>
        <dbReference type="PROSITE-ProRule" id="PRU00805"/>
    </source>
</evidence>
<evidence type="ECO:0000269" key="3">
    <source>
    </source>
</evidence>
<evidence type="ECO:0000305" key="4"/>
<evidence type="ECO:0000312" key="5">
    <source>
        <dbReference type="EMBL" id="CAB55169.1"/>
    </source>
</evidence>
<evidence type="ECO:0007829" key="6">
    <source>
        <dbReference type="PDB" id="5YLB"/>
    </source>
</evidence>
<reference evidence="5" key="1">
    <citation type="journal article" date="2002" name="Nature">
        <title>The genome sequence of Schizosaccharomyces pombe.</title>
        <authorList>
            <person name="Wood V."/>
            <person name="Gwilliam R."/>
            <person name="Rajandream M.A."/>
            <person name="Lyne M.H."/>
            <person name="Lyne R."/>
            <person name="Stewart A."/>
            <person name="Sgouros J.G."/>
            <person name="Peat N."/>
            <person name="Hayles J."/>
            <person name="Baker S.G."/>
            <person name="Basham D."/>
            <person name="Bowman S."/>
            <person name="Brooks K."/>
            <person name="Brown D."/>
            <person name="Brown S."/>
            <person name="Chillingworth T."/>
            <person name="Churcher C.M."/>
            <person name="Collins M."/>
            <person name="Connor R."/>
            <person name="Cronin A."/>
            <person name="Davis P."/>
            <person name="Feltwell T."/>
            <person name="Fraser A."/>
            <person name="Gentles S."/>
            <person name="Goble A."/>
            <person name="Hamlin N."/>
            <person name="Harris D.E."/>
            <person name="Hidalgo J."/>
            <person name="Hodgson G."/>
            <person name="Holroyd S."/>
            <person name="Hornsby T."/>
            <person name="Howarth S."/>
            <person name="Huckle E.J."/>
            <person name="Hunt S."/>
            <person name="Jagels K."/>
            <person name="James K.D."/>
            <person name="Jones L."/>
            <person name="Jones M."/>
            <person name="Leather S."/>
            <person name="McDonald S."/>
            <person name="McLean J."/>
            <person name="Mooney P."/>
            <person name="Moule S."/>
            <person name="Mungall K.L."/>
            <person name="Murphy L.D."/>
            <person name="Niblett D."/>
            <person name="Odell C."/>
            <person name="Oliver K."/>
            <person name="O'Neil S."/>
            <person name="Pearson D."/>
            <person name="Quail M.A."/>
            <person name="Rabbinowitsch E."/>
            <person name="Rutherford K.M."/>
            <person name="Rutter S."/>
            <person name="Saunders D."/>
            <person name="Seeger K."/>
            <person name="Sharp S."/>
            <person name="Skelton J."/>
            <person name="Simmonds M.N."/>
            <person name="Squares R."/>
            <person name="Squares S."/>
            <person name="Stevens K."/>
            <person name="Taylor K."/>
            <person name="Taylor R.G."/>
            <person name="Tivey A."/>
            <person name="Walsh S.V."/>
            <person name="Warren T."/>
            <person name="Whitehead S."/>
            <person name="Woodward J.R."/>
            <person name="Volckaert G."/>
            <person name="Aert R."/>
            <person name="Robben J."/>
            <person name="Grymonprez B."/>
            <person name="Weltjens I."/>
            <person name="Vanstreels E."/>
            <person name="Rieger M."/>
            <person name="Schaefer M."/>
            <person name="Mueller-Auer S."/>
            <person name="Gabel C."/>
            <person name="Fuchs M."/>
            <person name="Duesterhoeft A."/>
            <person name="Fritzc C."/>
            <person name="Holzer E."/>
            <person name="Moestl D."/>
            <person name="Hilbert H."/>
            <person name="Borzym K."/>
            <person name="Langer I."/>
            <person name="Beck A."/>
            <person name="Lehrach H."/>
            <person name="Reinhardt R."/>
            <person name="Pohl T.M."/>
            <person name="Eger P."/>
            <person name="Zimmermann W."/>
            <person name="Wedler H."/>
            <person name="Wambutt R."/>
            <person name="Purnelle B."/>
            <person name="Goffeau A."/>
            <person name="Cadieu E."/>
            <person name="Dreano S."/>
            <person name="Gloux S."/>
            <person name="Lelaure V."/>
            <person name="Mottier S."/>
            <person name="Galibert F."/>
            <person name="Aves S.J."/>
            <person name="Xiang Z."/>
            <person name="Hunt C."/>
            <person name="Moore K."/>
            <person name="Hurst S.M."/>
            <person name="Lucas M."/>
            <person name="Rochet M."/>
            <person name="Gaillardin C."/>
            <person name="Tallada V.A."/>
            <person name="Garzon A."/>
            <person name="Thode G."/>
            <person name="Daga R.R."/>
            <person name="Cruzado L."/>
            <person name="Jimenez J."/>
            <person name="Sanchez M."/>
            <person name="del Rey F."/>
            <person name="Benito J."/>
            <person name="Dominguez A."/>
            <person name="Revuelta J.L."/>
            <person name="Moreno S."/>
            <person name="Armstrong J."/>
            <person name="Forsburg S.L."/>
            <person name="Cerutti L."/>
            <person name="Lowe T."/>
            <person name="McCombie W.R."/>
            <person name="Paulsen I."/>
            <person name="Potashkin J."/>
            <person name="Shpakovski G.V."/>
            <person name="Ussery D."/>
            <person name="Barrell B.G."/>
            <person name="Nurse P."/>
        </authorList>
    </citation>
    <scope>NUCLEOTIDE SEQUENCE [LARGE SCALE GENOMIC DNA]</scope>
    <source>
        <strain>972 / ATCC 24843</strain>
    </source>
</reference>
<reference evidence="4" key="2">
    <citation type="journal article" date="2006" name="Nat. Biotechnol.">
        <title>ORFeome cloning and global analysis of protein localization in the fission yeast Schizosaccharomyces pombe.</title>
        <authorList>
            <person name="Matsuyama A."/>
            <person name="Arai R."/>
            <person name="Yashiroda Y."/>
            <person name="Shirai A."/>
            <person name="Kamata A."/>
            <person name="Sekido S."/>
            <person name="Kobayashi Y."/>
            <person name="Hashimoto A."/>
            <person name="Hamamoto M."/>
            <person name="Hiraoka Y."/>
            <person name="Horinouchi S."/>
            <person name="Yoshida M."/>
        </authorList>
    </citation>
    <scope>SUBCELLULAR LOCATION [LARGE SCALE ANALYSIS]</scope>
</reference>
<dbReference type="EMBL" id="CU329670">
    <property type="protein sequence ID" value="CAB55169.1"/>
    <property type="molecule type" value="Genomic_DNA"/>
</dbReference>
<dbReference type="PIR" id="T39239">
    <property type="entry name" value="T39239"/>
</dbReference>
<dbReference type="PDB" id="5YL6">
    <property type="method" value="X-ray"/>
    <property type="resolution" value="2.00 A"/>
    <property type="chains" value="A=36-219"/>
</dbReference>
<dbReference type="PDB" id="5YLB">
    <property type="method" value="X-ray"/>
    <property type="resolution" value="1.79 A"/>
    <property type="chains" value="A=33-219"/>
</dbReference>
<dbReference type="PDBsum" id="5YL6"/>
<dbReference type="PDBsum" id="5YLB"/>
<dbReference type="SMR" id="Q9UT12"/>
<dbReference type="BioGRID" id="277997">
    <property type="interactions" value="8"/>
</dbReference>
<dbReference type="FunCoup" id="Q9UT12">
    <property type="interactions" value="21"/>
</dbReference>
<dbReference type="STRING" id="284812.Q9UT12"/>
<dbReference type="PaxDb" id="4896-SPAP8A3.02c.1"/>
<dbReference type="EnsemblFungi" id="SPAP8A3.02c.1">
    <property type="protein sequence ID" value="SPAP8A3.02c.1:pep"/>
    <property type="gene ID" value="SPAP8A3.02c"/>
</dbReference>
<dbReference type="KEGG" id="spo:2541495"/>
<dbReference type="PomBase" id="SPAP8A3.02c"/>
<dbReference type="VEuPathDB" id="FungiDB:SPAP8A3.02c"/>
<dbReference type="eggNOG" id="KOG4176">
    <property type="taxonomic scope" value="Eukaryota"/>
</dbReference>
<dbReference type="HOGENOM" id="CLU_1107658_0_0_1"/>
<dbReference type="InParanoid" id="Q9UT12"/>
<dbReference type="OMA" id="WLHEIPF"/>
<dbReference type="PhylomeDB" id="Q9UT12"/>
<dbReference type="PRO" id="PR:Q9UT12"/>
<dbReference type="Proteomes" id="UP000002485">
    <property type="component" value="Chromosome I"/>
</dbReference>
<dbReference type="GO" id="GO:0000785">
    <property type="term" value="C:chromatin"/>
    <property type="evidence" value="ECO:0000314"/>
    <property type="project" value="PomBase"/>
</dbReference>
<dbReference type="GO" id="GO:0005829">
    <property type="term" value="C:cytosol"/>
    <property type="evidence" value="ECO:0007005"/>
    <property type="project" value="PomBase"/>
</dbReference>
<dbReference type="GO" id="GO:0005759">
    <property type="term" value="C:mitochondrial matrix"/>
    <property type="evidence" value="ECO:0000318"/>
    <property type="project" value="GO_Central"/>
</dbReference>
<dbReference type="GO" id="GO:0005634">
    <property type="term" value="C:nucleus"/>
    <property type="evidence" value="ECO:0000314"/>
    <property type="project" value="PomBase"/>
</dbReference>
<dbReference type="GO" id="GO:0016706">
    <property type="term" value="F:2-oxoglutarate-dependent dioxygenase activity"/>
    <property type="evidence" value="ECO:0000314"/>
    <property type="project" value="PomBase"/>
</dbReference>
<dbReference type="GO" id="GO:0008198">
    <property type="term" value="F:ferrous iron binding"/>
    <property type="evidence" value="ECO:0000314"/>
    <property type="project" value="PomBase"/>
</dbReference>
<dbReference type="GO" id="GO:0042393">
    <property type="term" value="F:histone binding"/>
    <property type="evidence" value="ECO:0000314"/>
    <property type="project" value="PomBase"/>
</dbReference>
<dbReference type="GO" id="GO:0031418">
    <property type="term" value="F:L-ascorbic acid binding"/>
    <property type="evidence" value="ECO:0007669"/>
    <property type="project" value="UniProtKB-KW"/>
</dbReference>
<dbReference type="GO" id="GO:0071456">
    <property type="term" value="P:cellular response to hypoxia"/>
    <property type="evidence" value="ECO:0000270"/>
    <property type="project" value="PomBase"/>
</dbReference>
<dbReference type="GO" id="GO:0006974">
    <property type="term" value="P:DNA damage response"/>
    <property type="evidence" value="ECO:0007669"/>
    <property type="project" value="InterPro"/>
</dbReference>
<dbReference type="GO" id="GO:0006631">
    <property type="term" value="P:fatty acid metabolic process"/>
    <property type="evidence" value="ECO:0000318"/>
    <property type="project" value="GO_Central"/>
</dbReference>
<dbReference type="Gene3D" id="2.60.120.590">
    <property type="entry name" value="Alpha-ketoglutarate-dependent dioxygenase AlkB-like"/>
    <property type="match status" value="1"/>
</dbReference>
<dbReference type="InterPro" id="IPR027450">
    <property type="entry name" value="AlkB-like"/>
</dbReference>
<dbReference type="InterPro" id="IPR037151">
    <property type="entry name" value="AlkB-like_sf"/>
</dbReference>
<dbReference type="InterPro" id="IPR032870">
    <property type="entry name" value="ALKBH7-like"/>
</dbReference>
<dbReference type="InterPro" id="IPR005123">
    <property type="entry name" value="Oxoglu/Fe-dep_dioxygenase_dom"/>
</dbReference>
<dbReference type="PANTHER" id="PTHR21052:SF0">
    <property type="entry name" value="ALPHA-KETOGLUTARATE-DEPENDENT DIOXYGENASE ALKB HOMOLOG 7, MITOCHONDRIAL"/>
    <property type="match status" value="1"/>
</dbReference>
<dbReference type="PANTHER" id="PTHR21052">
    <property type="entry name" value="SPERMATOGENESIS ASSOCIATED 11-RELATED"/>
    <property type="match status" value="1"/>
</dbReference>
<dbReference type="Pfam" id="PF13532">
    <property type="entry name" value="2OG-FeII_Oxy_2"/>
    <property type="match status" value="1"/>
</dbReference>
<dbReference type="SUPFAM" id="SSF51197">
    <property type="entry name" value="Clavaminate synthase-like"/>
    <property type="match status" value="1"/>
</dbReference>
<dbReference type="PROSITE" id="PS51471">
    <property type="entry name" value="FE2OG_OXY"/>
    <property type="match status" value="1"/>
</dbReference>